<keyword id="KW-0244">Early protein</keyword>
<keyword id="KW-0945">Host-virus interaction</keyword>
<keyword id="KW-1081">Inhibition of host apoptosis by viral BCL2-like protein</keyword>
<keyword id="KW-1119">Modulation of host cell apoptosis by virus</keyword>
<comment type="similarity">
    <text evidence="2">Belongs to the adenoviridae E1B 19 kDa protein family.</text>
</comment>
<proteinExistence type="inferred from homology"/>
<organismHost>
    <name type="scientific">Mus musculus</name>
    <name type="common">Mouse</name>
    <dbReference type="NCBI Taxonomy" id="10090"/>
</organismHost>
<protein>
    <recommendedName>
        <fullName>E1B protein, small T-antigen</fullName>
    </recommendedName>
    <alternativeName>
        <fullName>E1B 19 kDa protein</fullName>
        <shortName>E1B-19K</shortName>
    </alternativeName>
</protein>
<reference key="1">
    <citation type="journal article" date="1988" name="J. Virol.">
        <title>Identification of mouse adenovirus type 1 early region 1: DNA sequence and a conserved transactivating function.</title>
        <authorList>
            <person name="Ball A.O."/>
            <person name="Williams M.E."/>
            <person name="Spindler K.R."/>
        </authorList>
    </citation>
    <scope>NUCLEOTIDE SEQUENCE [GENOMIC DNA]</scope>
</reference>
<organism>
    <name type="scientific">Murine adenovirus A serotype 1</name>
    <name type="common">MAdV-1</name>
    <name type="synonym">Murine adenovirus 1</name>
    <dbReference type="NCBI Taxonomy" id="10530"/>
    <lineage>
        <taxon>Viruses</taxon>
        <taxon>Varidnaviria</taxon>
        <taxon>Bamfordvirae</taxon>
        <taxon>Preplasmiviricota</taxon>
        <taxon>Tectiliviricetes</taxon>
        <taxon>Rowavirales</taxon>
        <taxon>Adenoviridae</taxon>
        <taxon>Mastadenovirus</taxon>
        <taxon>Murine mastadenovirus A</taxon>
    </lineage>
</organism>
<accession>P12535</accession>
<sequence length="175" mass="20000">MLPVYPFLAPVFDTFESTRALFLEATLSLQEPWWFRLLSFFRSPRYTGLADVVRAIACEREADFTAITPSSLIEDIAEGRFVMLVGLMEYLRFDTAGQGIVSFAFLSYLIDRVTKQSPLAHFTVVEVVSLVVWRTVKLSRRRERRWVSQLSTLAEEDEDEEGTTLTTEAEQESSA</sequence>
<evidence type="ECO:0000256" key="1">
    <source>
        <dbReference type="SAM" id="MobiDB-lite"/>
    </source>
</evidence>
<evidence type="ECO:0000305" key="2"/>
<feature type="chain" id="PRO_0000221709" description="E1B protein, small T-antigen">
    <location>
        <begin position="1"/>
        <end position="175"/>
    </location>
</feature>
<feature type="region of interest" description="Disordered" evidence="1">
    <location>
        <begin position="153"/>
        <end position="175"/>
    </location>
</feature>
<dbReference type="EMBL" id="M22245">
    <property type="protein sequence ID" value="AAA42428.1"/>
    <property type="molecule type" value="Genomic_DNA"/>
</dbReference>
<dbReference type="PIR" id="B31158">
    <property type="entry name" value="Q1ADMA"/>
</dbReference>
<dbReference type="KEGG" id="vg:1732765"/>
<dbReference type="GO" id="GO:0033668">
    <property type="term" value="P:symbiont-mediated suppression of host apoptosis"/>
    <property type="evidence" value="ECO:0007669"/>
    <property type="project" value="UniProtKB-KW"/>
</dbReference>
<dbReference type="InterPro" id="IPR002924">
    <property type="entry name" value="Adenovir_t-Ag_E1B_19kDa"/>
</dbReference>
<dbReference type="Pfam" id="PF01691">
    <property type="entry name" value="Adeno_E1B_19K"/>
    <property type="match status" value="1"/>
</dbReference>
<name>E1BS_ADEM1</name>